<feature type="chain" id="PRO_1000026508" description="L-lactate dehydrogenase">
    <location>
        <begin position="1"/>
        <end position="328"/>
    </location>
</feature>
<feature type="active site" description="Proton acceptor" evidence="1">
    <location>
        <position position="181"/>
    </location>
</feature>
<feature type="binding site" evidence="1">
    <location>
        <position position="18"/>
    </location>
    <ligand>
        <name>NAD(+)</name>
        <dbReference type="ChEBI" id="CHEBI:57540"/>
    </ligand>
</feature>
<feature type="binding site" evidence="1">
    <location>
        <position position="39"/>
    </location>
    <ligand>
        <name>NAD(+)</name>
        <dbReference type="ChEBI" id="CHEBI:57540"/>
    </ligand>
</feature>
<feature type="binding site" evidence="1">
    <location>
        <position position="46"/>
    </location>
    <ligand>
        <name>NAD(+)</name>
        <dbReference type="ChEBI" id="CHEBI:57540"/>
    </ligand>
</feature>
<feature type="binding site" evidence="1">
    <location>
        <position position="71"/>
    </location>
    <ligand>
        <name>NAD(+)</name>
        <dbReference type="ChEBI" id="CHEBI:57540"/>
    </ligand>
</feature>
<feature type="binding site" evidence="1">
    <location>
        <begin position="85"/>
        <end position="86"/>
    </location>
    <ligand>
        <name>NAD(+)</name>
        <dbReference type="ChEBI" id="CHEBI:57540"/>
    </ligand>
</feature>
<feature type="binding site" evidence="1">
    <location>
        <position position="88"/>
    </location>
    <ligand>
        <name>substrate</name>
    </ligand>
</feature>
<feature type="binding site" evidence="1">
    <location>
        <position position="94"/>
    </location>
    <ligand>
        <name>substrate</name>
    </ligand>
</feature>
<feature type="binding site" evidence="1">
    <location>
        <position position="107"/>
    </location>
    <ligand>
        <name>NAD(+)</name>
        <dbReference type="ChEBI" id="CHEBI:57540"/>
    </ligand>
</feature>
<feature type="binding site" evidence="1">
    <location>
        <begin position="124"/>
        <end position="126"/>
    </location>
    <ligand>
        <name>NAD(+)</name>
        <dbReference type="ChEBI" id="CHEBI:57540"/>
    </ligand>
</feature>
<feature type="binding site" evidence="1">
    <location>
        <begin position="126"/>
        <end position="129"/>
    </location>
    <ligand>
        <name>substrate</name>
    </ligand>
</feature>
<feature type="binding site" evidence="1">
    <location>
        <position position="149"/>
    </location>
    <ligand>
        <name>NAD(+)</name>
        <dbReference type="ChEBI" id="CHEBI:57540"/>
    </ligand>
</feature>
<feature type="binding site" evidence="1">
    <location>
        <begin position="154"/>
        <end position="157"/>
    </location>
    <ligand>
        <name>substrate</name>
    </ligand>
</feature>
<feature type="binding site" evidence="1">
    <location>
        <position position="159"/>
    </location>
    <ligand>
        <name>beta-D-fructose 1,6-bisphosphate</name>
        <dbReference type="ChEBI" id="CHEBI:32966"/>
        <note>allosteric activator</note>
    </ligand>
</feature>
<feature type="binding site" evidence="1">
    <location>
        <position position="174"/>
    </location>
    <ligand>
        <name>beta-D-fructose 1,6-bisphosphate</name>
        <dbReference type="ChEBI" id="CHEBI:32966"/>
        <note>allosteric activator</note>
    </ligand>
</feature>
<feature type="binding site" evidence="1">
    <location>
        <position position="235"/>
    </location>
    <ligand>
        <name>substrate</name>
    </ligand>
</feature>
<feature type="modified residue" description="Phosphotyrosine" evidence="1">
    <location>
        <position position="226"/>
    </location>
</feature>
<name>LDH_STRP2</name>
<proteinExistence type="inferred from homology"/>
<reference key="1">
    <citation type="journal article" date="2007" name="J. Bacteriol.">
        <title>Genome sequence of Avery's virulent serotype 2 strain D39 of Streptococcus pneumoniae and comparison with that of unencapsulated laboratory strain R6.</title>
        <authorList>
            <person name="Lanie J.A."/>
            <person name="Ng W.-L."/>
            <person name="Kazmierczak K.M."/>
            <person name="Andrzejewski T.M."/>
            <person name="Davidsen T.M."/>
            <person name="Wayne K.J."/>
            <person name="Tettelin H."/>
            <person name="Glass J.I."/>
            <person name="Winkler M.E."/>
        </authorList>
    </citation>
    <scope>NUCLEOTIDE SEQUENCE [LARGE SCALE GENOMIC DNA]</scope>
    <source>
        <strain>D39 / NCTC 7466</strain>
    </source>
</reference>
<reference key="2">
    <citation type="journal article" date="2014" name="Infect. Immun.">
        <title>Lactate dehydrogenase is the key enzyme for pneumococcal pyruvate metabolism and pneumococcal survival in blood.</title>
        <authorList>
            <person name="Gaspar P."/>
            <person name="Al-Bayati F.A."/>
            <person name="Andrew P.W."/>
            <person name="Neves A.R."/>
            <person name="Yesilkaya H."/>
        </authorList>
    </citation>
    <scope>FUNCTION</scope>
    <scope>DISRUPTION PHENOTYPE</scope>
</reference>
<sequence>MTSTKQHKKVILVGDGAVGSSYAFALVNQGIAQELGIIEIPQLHEKAVGDALDLSHALAFTSPKKIYAAQYSDCADADLVVITAGAPQKPGETRLDLVGKNLAINKSIVTQVVESGFKGIFLVAANPVDVLTYSTWKFSGFPKERVIGSGTSLDSARFRQALAEKLDVDARSVHAYIMGEHGDSEFAVWSHANIAGVNLEEFLKDTQNVQEAELIELFEGVRDAAYTIINKKGATYYGIAVALARITKAILDDENAVLPLSVFQEGQYGVENVFIGQPAVVGAHGIVRPVNIPLNDAETQKMQASAKELQAIIDEAWKNPEFQEASKN</sequence>
<dbReference type="EC" id="1.1.1.27" evidence="1"/>
<dbReference type="EMBL" id="CP000410">
    <property type="protein sequence ID" value="ABJ53898.1"/>
    <property type="molecule type" value="Genomic_DNA"/>
</dbReference>
<dbReference type="RefSeq" id="WP_000204727.1">
    <property type="nucleotide sequence ID" value="NZ_JAMLJR010000006.1"/>
</dbReference>
<dbReference type="SMR" id="Q04K99"/>
<dbReference type="PaxDb" id="373153-SPD_1078"/>
<dbReference type="KEGG" id="spd:SPD_1078"/>
<dbReference type="eggNOG" id="COG0039">
    <property type="taxonomic scope" value="Bacteria"/>
</dbReference>
<dbReference type="HOGENOM" id="CLU_045401_1_1_9"/>
<dbReference type="BioCyc" id="SPNE373153:G1G6V-1169-MONOMER"/>
<dbReference type="UniPathway" id="UPA00554">
    <property type="reaction ID" value="UER00611"/>
</dbReference>
<dbReference type="Proteomes" id="UP000001452">
    <property type="component" value="Chromosome"/>
</dbReference>
<dbReference type="GO" id="GO:0005737">
    <property type="term" value="C:cytoplasm"/>
    <property type="evidence" value="ECO:0007669"/>
    <property type="project" value="UniProtKB-SubCell"/>
</dbReference>
<dbReference type="GO" id="GO:0004459">
    <property type="term" value="F:L-lactate dehydrogenase activity"/>
    <property type="evidence" value="ECO:0007669"/>
    <property type="project" value="UniProtKB-UniRule"/>
</dbReference>
<dbReference type="GO" id="GO:0006096">
    <property type="term" value="P:glycolytic process"/>
    <property type="evidence" value="ECO:0007669"/>
    <property type="project" value="UniProtKB-UniRule"/>
</dbReference>
<dbReference type="GO" id="GO:0006089">
    <property type="term" value="P:lactate metabolic process"/>
    <property type="evidence" value="ECO:0007669"/>
    <property type="project" value="TreeGrafter"/>
</dbReference>
<dbReference type="CDD" id="cd05291">
    <property type="entry name" value="HicDH_like"/>
    <property type="match status" value="1"/>
</dbReference>
<dbReference type="FunFam" id="3.40.50.720:FF:000018">
    <property type="entry name" value="Malate dehydrogenase"/>
    <property type="match status" value="1"/>
</dbReference>
<dbReference type="Gene3D" id="3.90.110.10">
    <property type="entry name" value="Lactate dehydrogenase/glycoside hydrolase, family 4, C-terminal"/>
    <property type="match status" value="1"/>
</dbReference>
<dbReference type="Gene3D" id="3.40.50.720">
    <property type="entry name" value="NAD(P)-binding Rossmann-like Domain"/>
    <property type="match status" value="1"/>
</dbReference>
<dbReference type="HAMAP" id="MF_00488">
    <property type="entry name" value="Lactate_dehydrog"/>
    <property type="match status" value="1"/>
</dbReference>
<dbReference type="InterPro" id="IPR001557">
    <property type="entry name" value="L-lactate/malate_DH"/>
</dbReference>
<dbReference type="InterPro" id="IPR011304">
    <property type="entry name" value="L-lactate_DH"/>
</dbReference>
<dbReference type="InterPro" id="IPR018177">
    <property type="entry name" value="L-lactate_DH_AS"/>
</dbReference>
<dbReference type="InterPro" id="IPR022383">
    <property type="entry name" value="Lactate/malate_DH_C"/>
</dbReference>
<dbReference type="InterPro" id="IPR001236">
    <property type="entry name" value="Lactate/malate_DH_N"/>
</dbReference>
<dbReference type="InterPro" id="IPR015955">
    <property type="entry name" value="Lactate_DH/Glyco_Ohase_4_C"/>
</dbReference>
<dbReference type="InterPro" id="IPR036291">
    <property type="entry name" value="NAD(P)-bd_dom_sf"/>
</dbReference>
<dbReference type="NCBIfam" id="TIGR01771">
    <property type="entry name" value="L-LDH-NAD"/>
    <property type="match status" value="1"/>
</dbReference>
<dbReference type="NCBIfam" id="NF000824">
    <property type="entry name" value="PRK00066.1"/>
    <property type="match status" value="1"/>
</dbReference>
<dbReference type="PANTHER" id="PTHR43128">
    <property type="entry name" value="L-2-HYDROXYCARBOXYLATE DEHYDROGENASE (NAD(P)(+))"/>
    <property type="match status" value="1"/>
</dbReference>
<dbReference type="PANTHER" id="PTHR43128:SF16">
    <property type="entry name" value="L-LACTATE DEHYDROGENASE"/>
    <property type="match status" value="1"/>
</dbReference>
<dbReference type="Pfam" id="PF02866">
    <property type="entry name" value="Ldh_1_C"/>
    <property type="match status" value="1"/>
</dbReference>
<dbReference type="Pfam" id="PF00056">
    <property type="entry name" value="Ldh_1_N"/>
    <property type="match status" value="1"/>
</dbReference>
<dbReference type="PIRSF" id="PIRSF000102">
    <property type="entry name" value="Lac_mal_DH"/>
    <property type="match status" value="1"/>
</dbReference>
<dbReference type="PRINTS" id="PR00086">
    <property type="entry name" value="LLDHDRGNASE"/>
</dbReference>
<dbReference type="SUPFAM" id="SSF56327">
    <property type="entry name" value="LDH C-terminal domain-like"/>
    <property type="match status" value="1"/>
</dbReference>
<dbReference type="SUPFAM" id="SSF51735">
    <property type="entry name" value="NAD(P)-binding Rossmann-fold domains"/>
    <property type="match status" value="1"/>
</dbReference>
<dbReference type="PROSITE" id="PS00064">
    <property type="entry name" value="L_LDH"/>
    <property type="match status" value="1"/>
</dbReference>
<comment type="function">
    <text evidence="1 2">Catalyzes the conversion of lactate to pyruvate (By similarity). Plays a role in redox balance maintenance (PubMed:25245810). May play a role in enhancing virulence in mice (PubMed:25245810). May be considered a potential virulence factor (PubMed:25245810).</text>
</comment>
<comment type="catalytic activity">
    <reaction evidence="1">
        <text>(S)-lactate + NAD(+) = pyruvate + NADH + H(+)</text>
        <dbReference type="Rhea" id="RHEA:23444"/>
        <dbReference type="ChEBI" id="CHEBI:15361"/>
        <dbReference type="ChEBI" id="CHEBI:15378"/>
        <dbReference type="ChEBI" id="CHEBI:16651"/>
        <dbReference type="ChEBI" id="CHEBI:57540"/>
        <dbReference type="ChEBI" id="CHEBI:57945"/>
        <dbReference type="EC" id="1.1.1.27"/>
    </reaction>
</comment>
<comment type="activity regulation">
    <text evidence="1">Allosterically activated by fructose 1,6-bisphosphate (FBP).</text>
</comment>
<comment type="pathway">
    <text evidence="1">Fermentation; pyruvate fermentation to lactate; (S)-lactate from pyruvate: step 1/1.</text>
</comment>
<comment type="subunit">
    <text evidence="1">Homotetramer.</text>
</comment>
<comment type="subcellular location">
    <subcellularLocation>
        <location evidence="1">Cytoplasm</location>
    </subcellularLocation>
</comment>
<comment type="disruption phenotype">
    <text evidence="2">Lactate production is abolished (PubMed:25245810). Growth rate is 2.5-fold-lower when cultured in media with glucose as the sole carbon source, but unaffected when cultured with galactose (PubMed:25245810). Adopts a mixed-acid fermentation profile on glucose with production of pyruvate, acetate, and ethanol (PubMed:25245810). Attenuates virulence and development of bacteremia in mouse intranasal and intravenous infection models (PubMed:25245810). In bacteria recovered from infected mice, significantly higher expression levels of pyruvate formate lyase pflB and aldehyde-alcohol dehydrogenase adhE/SPD_1834, and lower level of capsule synthesis gene cps2H (PubMed:25245810).</text>
</comment>
<comment type="similarity">
    <text evidence="1">Belongs to the LDH/MDH superfamily. LDH family.</text>
</comment>
<organism>
    <name type="scientific">Streptococcus pneumoniae serotype 2 (strain D39 / NCTC 7466)</name>
    <dbReference type="NCBI Taxonomy" id="373153"/>
    <lineage>
        <taxon>Bacteria</taxon>
        <taxon>Bacillati</taxon>
        <taxon>Bacillota</taxon>
        <taxon>Bacilli</taxon>
        <taxon>Lactobacillales</taxon>
        <taxon>Streptococcaceae</taxon>
        <taxon>Streptococcus</taxon>
    </lineage>
</organism>
<accession>Q04K99</accession>
<protein>
    <recommendedName>
        <fullName evidence="1">L-lactate dehydrogenase</fullName>
        <shortName evidence="1">L-LDH</shortName>
        <ecNumber evidence="1">1.1.1.27</ecNumber>
    </recommendedName>
</protein>
<gene>
    <name evidence="1" type="primary">ldh</name>
    <name type="ordered locus">SPD_1078</name>
</gene>
<evidence type="ECO:0000255" key="1">
    <source>
        <dbReference type="HAMAP-Rule" id="MF_00488"/>
    </source>
</evidence>
<evidence type="ECO:0000269" key="2">
    <source>
    </source>
</evidence>
<keyword id="KW-0021">Allosteric enzyme</keyword>
<keyword id="KW-0963">Cytoplasm</keyword>
<keyword id="KW-0520">NAD</keyword>
<keyword id="KW-0560">Oxidoreductase</keyword>
<keyword id="KW-0597">Phosphoprotein</keyword>
<keyword id="KW-1185">Reference proteome</keyword>